<feature type="chain" id="PRO_1000079978" description="Exodeoxyribonuclease 7 large subunit">
    <location>
        <begin position="1"/>
        <end position="528"/>
    </location>
</feature>
<feature type="region of interest" description="Disordered" evidence="2">
    <location>
        <begin position="486"/>
        <end position="528"/>
    </location>
</feature>
<feature type="compositionally biased region" description="Pro residues" evidence="2">
    <location>
        <begin position="504"/>
        <end position="517"/>
    </location>
</feature>
<evidence type="ECO:0000255" key="1">
    <source>
        <dbReference type="HAMAP-Rule" id="MF_00378"/>
    </source>
</evidence>
<evidence type="ECO:0000256" key="2">
    <source>
        <dbReference type="SAM" id="MobiDB-lite"/>
    </source>
</evidence>
<keyword id="KW-0963">Cytoplasm</keyword>
<keyword id="KW-0269">Exonuclease</keyword>
<keyword id="KW-0378">Hydrolase</keyword>
<keyword id="KW-0540">Nuclease</keyword>
<organism>
    <name type="scientific">Caulobacter sp. (strain K31)</name>
    <dbReference type="NCBI Taxonomy" id="366602"/>
    <lineage>
        <taxon>Bacteria</taxon>
        <taxon>Pseudomonadati</taxon>
        <taxon>Pseudomonadota</taxon>
        <taxon>Alphaproteobacteria</taxon>
        <taxon>Caulobacterales</taxon>
        <taxon>Caulobacteraceae</taxon>
        <taxon>Caulobacter</taxon>
    </lineage>
</organism>
<proteinExistence type="inferred from homology"/>
<sequence length="528" mass="57101">MTDVVPDSNAPAYSVSELAFALKRTLETSYAFVRLRGELSKVTHHGNGHVYLTIKDDKSAIDGVVWKGNVRGLGIRPEHGLEVIVTGKITTYPAGSRYQIVIETMEAAGVGALLAQLERLKAKLNAEGLFAPDRKRPLPSMPAVVGVITSPTGAVIRDILHRIRDRWPCQVLVWPCVVQGDAAAGQVSAAIRGFNALTPGGPVPRPDILIVARGGGSVEDLWAFNDEGLARTVAEGTIPLISAVGHETDTTLIDFVSDRRAPTPTAAAEMATPVLAELRALVSDYDRRLNNCGGRAVEERRTRLTSAARGLPRPADLLALAQQRLDLAVRGLPRLDDLTAPAERRFKEAAARLDTALQRNTDIHARDLLKVTARLSPDTLHRQRADAGRRVGDLGRRLDLAARRVPERVAQHARLPALQDRLNAVARRRLERETDRLAGLEKLRQSLNPTRPLELGFALVHKADGGIARSASELASGERVRLQFRQGDRDAVIDGESSGVLPPSAAPAPTRPTPRPKPASSSDQGSLF</sequence>
<reference key="1">
    <citation type="submission" date="2008-01" db="EMBL/GenBank/DDBJ databases">
        <title>Complete sequence of chromosome of Caulobacter sp. K31.</title>
        <authorList>
            <consortium name="US DOE Joint Genome Institute"/>
            <person name="Copeland A."/>
            <person name="Lucas S."/>
            <person name="Lapidus A."/>
            <person name="Barry K."/>
            <person name="Glavina del Rio T."/>
            <person name="Dalin E."/>
            <person name="Tice H."/>
            <person name="Pitluck S."/>
            <person name="Bruce D."/>
            <person name="Goodwin L."/>
            <person name="Thompson L.S."/>
            <person name="Brettin T."/>
            <person name="Detter J.C."/>
            <person name="Han C."/>
            <person name="Schmutz J."/>
            <person name="Larimer F."/>
            <person name="Land M."/>
            <person name="Hauser L."/>
            <person name="Kyrpides N."/>
            <person name="Kim E."/>
            <person name="Stephens C."/>
            <person name="Richardson P."/>
        </authorList>
    </citation>
    <scope>NUCLEOTIDE SEQUENCE [LARGE SCALE GENOMIC DNA]</scope>
    <source>
        <strain>K31</strain>
    </source>
</reference>
<dbReference type="EC" id="3.1.11.6" evidence="1"/>
<dbReference type="EMBL" id="CP000927">
    <property type="protein sequence ID" value="ABZ70356.1"/>
    <property type="molecule type" value="Genomic_DNA"/>
</dbReference>
<dbReference type="SMR" id="B0SY33"/>
<dbReference type="STRING" id="366602.Caul_1226"/>
<dbReference type="KEGG" id="cak:Caul_1226"/>
<dbReference type="eggNOG" id="COG1570">
    <property type="taxonomic scope" value="Bacteria"/>
</dbReference>
<dbReference type="HOGENOM" id="CLU_023625_3_1_5"/>
<dbReference type="OrthoDB" id="9802795at2"/>
<dbReference type="GO" id="GO:0005737">
    <property type="term" value="C:cytoplasm"/>
    <property type="evidence" value="ECO:0007669"/>
    <property type="project" value="UniProtKB-SubCell"/>
</dbReference>
<dbReference type="GO" id="GO:0009318">
    <property type="term" value="C:exodeoxyribonuclease VII complex"/>
    <property type="evidence" value="ECO:0007669"/>
    <property type="project" value="InterPro"/>
</dbReference>
<dbReference type="GO" id="GO:0008855">
    <property type="term" value="F:exodeoxyribonuclease VII activity"/>
    <property type="evidence" value="ECO:0007669"/>
    <property type="project" value="UniProtKB-UniRule"/>
</dbReference>
<dbReference type="GO" id="GO:0003676">
    <property type="term" value="F:nucleic acid binding"/>
    <property type="evidence" value="ECO:0007669"/>
    <property type="project" value="InterPro"/>
</dbReference>
<dbReference type="GO" id="GO:0006308">
    <property type="term" value="P:DNA catabolic process"/>
    <property type="evidence" value="ECO:0007669"/>
    <property type="project" value="UniProtKB-UniRule"/>
</dbReference>
<dbReference type="CDD" id="cd04489">
    <property type="entry name" value="ExoVII_LU_OBF"/>
    <property type="match status" value="1"/>
</dbReference>
<dbReference type="HAMAP" id="MF_00378">
    <property type="entry name" value="Exonuc_7_L"/>
    <property type="match status" value="1"/>
</dbReference>
<dbReference type="InterPro" id="IPR003753">
    <property type="entry name" value="Exonuc_VII_L"/>
</dbReference>
<dbReference type="InterPro" id="IPR020579">
    <property type="entry name" value="Exonuc_VII_lsu_C"/>
</dbReference>
<dbReference type="InterPro" id="IPR025824">
    <property type="entry name" value="OB-fold_nuc-bd_dom"/>
</dbReference>
<dbReference type="NCBIfam" id="TIGR00237">
    <property type="entry name" value="xseA"/>
    <property type="match status" value="1"/>
</dbReference>
<dbReference type="PANTHER" id="PTHR30008">
    <property type="entry name" value="EXODEOXYRIBONUCLEASE 7 LARGE SUBUNIT"/>
    <property type="match status" value="1"/>
</dbReference>
<dbReference type="PANTHER" id="PTHR30008:SF0">
    <property type="entry name" value="EXODEOXYRIBONUCLEASE 7 LARGE SUBUNIT"/>
    <property type="match status" value="1"/>
</dbReference>
<dbReference type="Pfam" id="PF02601">
    <property type="entry name" value="Exonuc_VII_L"/>
    <property type="match status" value="1"/>
</dbReference>
<dbReference type="Pfam" id="PF13742">
    <property type="entry name" value="tRNA_anti_2"/>
    <property type="match status" value="1"/>
</dbReference>
<comment type="function">
    <text evidence="1">Bidirectionally degrades single-stranded DNA into large acid-insoluble oligonucleotides, which are then degraded further into small acid-soluble oligonucleotides.</text>
</comment>
<comment type="catalytic activity">
    <reaction evidence="1">
        <text>Exonucleolytic cleavage in either 5'- to 3'- or 3'- to 5'-direction to yield nucleoside 5'-phosphates.</text>
        <dbReference type="EC" id="3.1.11.6"/>
    </reaction>
</comment>
<comment type="subunit">
    <text evidence="1">Heterooligomer composed of large and small subunits.</text>
</comment>
<comment type="subcellular location">
    <subcellularLocation>
        <location evidence="1">Cytoplasm</location>
    </subcellularLocation>
</comment>
<comment type="similarity">
    <text evidence="1">Belongs to the XseA family.</text>
</comment>
<protein>
    <recommendedName>
        <fullName evidence="1">Exodeoxyribonuclease 7 large subunit</fullName>
        <ecNumber evidence="1">3.1.11.6</ecNumber>
    </recommendedName>
    <alternativeName>
        <fullName evidence="1">Exodeoxyribonuclease VII large subunit</fullName>
        <shortName evidence="1">Exonuclease VII large subunit</shortName>
    </alternativeName>
</protein>
<accession>B0SY33</accession>
<gene>
    <name evidence="1" type="primary">xseA</name>
    <name type="ordered locus">Caul_1226</name>
</gene>
<name>EX7L_CAUSK</name>